<reference evidence="10" key="1">
    <citation type="journal article" date="2006" name="Mol. Immunol.">
        <title>Molecular cloning of Indian jujube (Zizyphus mauritiana) allergen Ziz m 1 with sequence similarity to plant class III chitinases.</title>
        <authorList>
            <person name="Lee M.F."/>
            <person name="Hwang G.Y."/>
            <person name="Chen Y.H."/>
            <person name="Lin H.C."/>
            <person name="Wu C.H."/>
        </authorList>
    </citation>
    <scope>NUCLEOTIDE SEQUENCE [MRNA]</scope>
    <scope>PROTEIN SEQUENCE OF 146-154</scope>
    <scope>CATALYTIC ACTIVITY</scope>
    <scope>SUBCELLULAR LOCATION</scope>
    <scope>IDENTIFICATION BY MASS SPECTROMETRY</scope>
    <scope>ALLERGEN</scope>
    <source>
        <tissue evidence="7">Flower bud</tissue>
    </source>
</reference>
<reference key="2">
    <citation type="journal article" date="2008" name="Clin. Exp. Immunol.">
        <title>Identification of immunoglobulin E (IgE)-binding epitopes and recombinant IgE reactivities of a latex cross-reacting Indian jujube Ziz m 1 allergen.</title>
        <authorList>
            <person name="Lee M.F."/>
            <person name="Tsai J.J."/>
            <person name="Hwang G.Y."/>
            <person name="Lin S.J."/>
            <person name="Chen Y.H."/>
        </authorList>
    </citation>
    <scope>ALLERGEN</scope>
    <scope>REGIONS</scope>
</reference>
<reference key="3">
    <citation type="journal article" date="2012" name="Ann. Allergy Asthma Immunol.">
        <title>Plant chitinase III Ziz m 1 stimulates multiple cytokines, most predominantly interleukin-13, from peripheral blood mononuclear cells of latex-fruit allergic patients.</title>
        <authorList>
            <person name="Lee M.F."/>
            <person name="Lin S.J."/>
            <person name="Wang N.M."/>
            <person name="Wu H.J."/>
            <person name="Chen Y.H."/>
        </authorList>
    </citation>
    <scope>ALLERGEN</scope>
</reference>
<accession>Q2VST0</accession>
<comment type="function">
    <text evidence="9">Defense against chitin containing fungal pathogens (Probable).</text>
</comment>
<comment type="catalytic activity">
    <reaction evidence="4">
        <text>Random endo-hydrolysis of N-acetyl-beta-D-glucosaminide (1-&gt;4)-beta-linkages in chitin and chitodextrins.</text>
        <dbReference type="EC" id="3.2.1.14"/>
    </reaction>
</comment>
<comment type="subcellular location">
    <subcellularLocation>
        <location evidence="4">Secreted</location>
    </subcellularLocation>
</comment>
<comment type="allergen">
    <text evidence="4 5 6">Causes an allergic reaction in human. Binds to IgE of patients allergic to both the Indian jujube and latex (PubMed:16122801, PubMed:18435802, PubMed:22289730). Natural protein binds to IgE of patients allergic to the fruit of the Indian jujube. Recombinant protein binds to IgE in 87.5% of the 8 latex- and Indian jujube-allergic patients tested (PubMed:16122801). May stimulate allergic inflammation by inducing T-helper type 2 (Th2)-specific immune responses including increased production of cytokines, most predominantly IL13, from peripheral blood mononuclear cells (PBMC) of patients allergic to both latex and the fruit of the Indian jujube. Chitinase activity is required for this function (PubMed:22289730).</text>
</comment>
<comment type="similarity">
    <text evidence="9">Belongs to the glycosyl hydrolase 18 family. Chitinase class II subfamily.</text>
</comment>
<dbReference type="EC" id="3.2.1.14" evidence="4"/>
<dbReference type="EMBL" id="AY839230">
    <property type="protein sequence ID" value="AAX40948.1"/>
    <property type="molecule type" value="mRNA"/>
</dbReference>
<dbReference type="SMR" id="Q2VST0"/>
<dbReference type="Allergome" id="2487">
    <property type="allergen name" value="Ziz m 1"/>
</dbReference>
<dbReference type="Allergome" id="3537">
    <property type="allergen name" value="Ziz m 1.0101"/>
</dbReference>
<dbReference type="CAZy" id="GH18">
    <property type="family name" value="Glycoside Hydrolase Family 18"/>
</dbReference>
<dbReference type="GO" id="GO:0005576">
    <property type="term" value="C:extracellular region"/>
    <property type="evidence" value="ECO:0000314"/>
    <property type="project" value="UniProtKB"/>
</dbReference>
<dbReference type="GO" id="GO:0008843">
    <property type="term" value="F:endochitinase activity"/>
    <property type="evidence" value="ECO:0000314"/>
    <property type="project" value="UniProtKB"/>
</dbReference>
<dbReference type="GO" id="GO:0006040">
    <property type="term" value="P:amino sugar metabolic process"/>
    <property type="evidence" value="ECO:0000314"/>
    <property type="project" value="UniProtKB"/>
</dbReference>
<dbReference type="GO" id="GO:0006032">
    <property type="term" value="P:chitin catabolic process"/>
    <property type="evidence" value="ECO:0000314"/>
    <property type="project" value="UniProtKB"/>
</dbReference>
<dbReference type="GO" id="GO:0050832">
    <property type="term" value="P:defense response to fungus"/>
    <property type="evidence" value="ECO:0000305"/>
    <property type="project" value="UniProtKB"/>
</dbReference>
<dbReference type="GO" id="GO:0000272">
    <property type="term" value="P:polysaccharide catabolic process"/>
    <property type="evidence" value="ECO:0007669"/>
    <property type="project" value="UniProtKB-KW"/>
</dbReference>
<dbReference type="CDD" id="cd02877">
    <property type="entry name" value="GH18_hevamine_XipI_class_III"/>
    <property type="match status" value="1"/>
</dbReference>
<dbReference type="Gene3D" id="3.20.20.80">
    <property type="entry name" value="Glycosidases"/>
    <property type="match status" value="1"/>
</dbReference>
<dbReference type="InterPro" id="IPR045321">
    <property type="entry name" value="Cts1-like"/>
</dbReference>
<dbReference type="InterPro" id="IPR001223">
    <property type="entry name" value="Glyco_hydro18_cat"/>
</dbReference>
<dbReference type="InterPro" id="IPR017853">
    <property type="entry name" value="Glycoside_hydrolase_SF"/>
</dbReference>
<dbReference type="InterPro" id="IPR050542">
    <property type="entry name" value="Glycosyl_Hydrlase18_Chitinase"/>
</dbReference>
<dbReference type="PANTHER" id="PTHR45708:SF21">
    <property type="entry name" value="ACIDIC ENDOCHITINASE"/>
    <property type="match status" value="1"/>
</dbReference>
<dbReference type="PANTHER" id="PTHR45708">
    <property type="entry name" value="ENDOCHITINASE"/>
    <property type="match status" value="1"/>
</dbReference>
<dbReference type="Pfam" id="PF00704">
    <property type="entry name" value="Glyco_hydro_18"/>
    <property type="match status" value="1"/>
</dbReference>
<dbReference type="SUPFAM" id="SSF51445">
    <property type="entry name" value="(Trans)glycosidases"/>
    <property type="match status" value="1"/>
</dbReference>
<dbReference type="PROSITE" id="PS51910">
    <property type="entry name" value="GH18_2"/>
    <property type="match status" value="1"/>
</dbReference>
<sequence length="330" mass="36424">MVPQAKLVVASLILTSALIQTSEAVGGIATYWGQYTETEEGSLAEACASNLYSYINIAYLNIFGEGRYLSLNISGHCSDCTFLGEEIKACQSQGVKIFLSLGGPYGDYHLTTDGDADRVAEQLWSSFLGGSKSTGVYQPLLGDVELDGIDLDIQIGPPEEYDVLARNLKDLTKDRTRPFYLSAAPKCSAYNDSDAYLWTAVETGLFDFVWVKFYNDTSCQYNNDTAAGLDAFYRSWYDWTVSLAEGNKLLIGIPASNETDNSPLGGYIPSDVLNDQIVSVIMTSSKFGGVNVWNRYYDLKTNYSSSIILEYVNSGTKYLPLRTKFMYQNA</sequence>
<proteinExistence type="evidence at protein level"/>
<organism>
    <name type="scientific">Ziziphus mauritiana</name>
    <name type="common">Indian jujube</name>
    <dbReference type="NCBI Taxonomy" id="157914"/>
    <lineage>
        <taxon>Eukaryota</taxon>
        <taxon>Viridiplantae</taxon>
        <taxon>Streptophyta</taxon>
        <taxon>Embryophyta</taxon>
        <taxon>Tracheophyta</taxon>
        <taxon>Spermatophyta</taxon>
        <taxon>Magnoliopsida</taxon>
        <taxon>eudicotyledons</taxon>
        <taxon>Gunneridae</taxon>
        <taxon>Pentapetalae</taxon>
        <taxon>rosids</taxon>
        <taxon>fabids</taxon>
        <taxon>Rosales</taxon>
        <taxon>Rhamnaceae</taxon>
        <taxon>Paliureae</taxon>
        <taxon>Ziziphus</taxon>
    </lineage>
</organism>
<protein>
    <recommendedName>
        <fullName evidence="9">Endochitinase Ziz m 1.0101</fullName>
        <ecNumber evidence="4">3.2.1.14</ecNumber>
    </recommendedName>
    <alternativeName>
        <fullName evidence="7 8 10">Allergen Ziz m 1</fullName>
    </alternativeName>
    <allergenName evidence="9">Ziz m 1.0101</allergenName>
</protein>
<evidence type="ECO:0000250" key="1">
    <source>
        <dbReference type="UniProtKB" id="P23472"/>
    </source>
</evidence>
<evidence type="ECO:0000255" key="2"/>
<evidence type="ECO:0000255" key="3">
    <source>
        <dbReference type="PROSITE-ProRule" id="PRU01258"/>
    </source>
</evidence>
<evidence type="ECO:0000269" key="4">
    <source>
    </source>
</evidence>
<evidence type="ECO:0000269" key="5">
    <source>
    </source>
</evidence>
<evidence type="ECO:0000269" key="6">
    <source>
    </source>
</evidence>
<evidence type="ECO:0000303" key="7">
    <source>
    </source>
</evidence>
<evidence type="ECO:0000303" key="8">
    <source>
    </source>
</evidence>
<evidence type="ECO:0000305" key="9"/>
<evidence type="ECO:0000312" key="10">
    <source>
        <dbReference type="EMBL" id="AAX40948.1"/>
    </source>
</evidence>
<feature type="signal peptide" evidence="2">
    <location>
        <begin position="1"/>
        <end position="24"/>
    </location>
</feature>
<feature type="chain" id="PRO_5004217981" description="Endochitinase Ziz m 1.0101" evidence="2">
    <location>
        <begin position="25"/>
        <end position="330"/>
    </location>
</feature>
<feature type="domain" description="GH18" evidence="3">
    <location>
        <begin position="26"/>
        <end position="330"/>
    </location>
</feature>
<feature type="region of interest" description="Binds to IgE in 70% of the 10 patients tested allergic to Indian jujube and latex" evidence="5">
    <location>
        <begin position="72"/>
        <end position="86"/>
    </location>
</feature>
<feature type="region of interest" description="Binds to IgE in 100% of the 10 patients tested allergic to Indian jujube and latex; sufficient for prediction of the presence of allergic reactions in these patients" evidence="5">
    <location>
        <begin position="292"/>
        <end position="301"/>
    </location>
</feature>
<feature type="region of interest" description="Binds to IgE in 70% of the 10 patients tested allergic to Indian jujube and latex" evidence="5">
    <location>
        <begin position="300"/>
        <end position="311"/>
    </location>
</feature>
<feature type="region of interest" description="Binds to IgE in 70% of the 10 patients tested allergic to Indian jujube and latex" evidence="5">
    <location>
        <begin position="309"/>
        <end position="320"/>
    </location>
</feature>
<feature type="disulfide bond" evidence="1">
    <location>
        <begin position="47"/>
        <end position="90"/>
    </location>
</feature>
<feature type="disulfide bond" evidence="1">
    <location>
        <begin position="77"/>
        <end position="80"/>
    </location>
</feature>
<feature type="disulfide bond" evidence="1">
    <location>
        <begin position="187"/>
        <end position="219"/>
    </location>
</feature>
<keyword id="KW-0020">Allergen</keyword>
<keyword id="KW-0119">Carbohydrate metabolism</keyword>
<keyword id="KW-0146">Chitin degradation</keyword>
<keyword id="KW-0903">Direct protein sequencing</keyword>
<keyword id="KW-1015">Disulfide bond</keyword>
<keyword id="KW-0326">Glycosidase</keyword>
<keyword id="KW-0378">Hydrolase</keyword>
<keyword id="KW-0611">Plant defense</keyword>
<keyword id="KW-0624">Polysaccharide degradation</keyword>
<keyword id="KW-0964">Secreted</keyword>
<keyword id="KW-0732">Signal</keyword>
<name>CHIT_ZIZMA</name>